<gene>
    <name type="primary">GGTA1</name>
</gene>
<organism>
    <name type="scientific">Sapajus apella</name>
    <name type="common">Brown-capped capuchin</name>
    <name type="synonym">Cebus apella</name>
    <dbReference type="NCBI Taxonomy" id="9515"/>
    <lineage>
        <taxon>Eukaryota</taxon>
        <taxon>Metazoa</taxon>
        <taxon>Chordata</taxon>
        <taxon>Craniata</taxon>
        <taxon>Vertebrata</taxon>
        <taxon>Euteleostomi</taxon>
        <taxon>Mammalia</taxon>
        <taxon>Eutheria</taxon>
        <taxon>Euarchontoglires</taxon>
        <taxon>Primates</taxon>
        <taxon>Haplorrhini</taxon>
        <taxon>Platyrrhini</taxon>
        <taxon>Cebidae</taxon>
        <taxon>Cebinae</taxon>
        <taxon>Sapajus</taxon>
    </lineage>
</organism>
<sequence>MNVKGKVILSMLVVSTVIVVFWEYINSPEGSFLWIYHSKNPEVDDSAQKGWWFPDWFNNGIHNYQQEEEDIDKEKGREEEQRKEDDTTELQLWDWFNPKKRPEVVTVTKWKAPVVWEGTYNKAILENYYAKQKITVGLTVFAIGRYIEHYLEEFVTSANRYFMVGHKVIFYVMVDDVSKVPFIELGPLRSFKVFEVKPEKRWQDISMMRMKTIGEHILAHIQHEVDFLFCMDVDQVFQDHFGVETLGQSVAQLQAWWYKADPDDFTYERRRESAAYIPFGQGDFYYHAAVFGGTPIQVLNITQECFKGILLDKKNDIEAEWHDESHLNKYFLLNKPSKILSPEYCWDYHIGLPSDIKTVKLSWQTKEYNLVRNNV</sequence>
<feature type="chain" id="PRO_0000333699" description="N-acetyllactosaminide alpha-1,3-galactosyltransferase">
    <location>
        <begin position="1"/>
        <end position="375"/>
    </location>
</feature>
<feature type="topological domain" description="Cytoplasmic" evidence="3">
    <location>
        <begin position="1"/>
        <end position="6"/>
    </location>
</feature>
<feature type="transmembrane region" description="Helical; Signal-anchor for type II membrane protein" evidence="3">
    <location>
        <begin position="7"/>
        <end position="27"/>
    </location>
</feature>
<feature type="topological domain" description="Lumenal" evidence="3">
    <location>
        <begin position="28"/>
        <end position="375"/>
    </location>
</feature>
<feature type="active site" description="Nucleophile" evidence="2">
    <location>
        <position position="324"/>
    </location>
</feature>
<feature type="binding site" evidence="2">
    <location>
        <begin position="141"/>
        <end position="146"/>
    </location>
    <ligand>
        <name>substrate</name>
    </ligand>
</feature>
<feature type="binding site" evidence="2">
    <location>
        <begin position="232"/>
        <end position="234"/>
    </location>
    <ligand>
        <name>substrate</name>
    </ligand>
</feature>
<feature type="binding site" evidence="2">
    <location>
        <position position="232"/>
    </location>
    <ligand>
        <name>Mn(2+)</name>
        <dbReference type="ChEBI" id="CHEBI:29035"/>
    </ligand>
</feature>
<feature type="binding site" evidence="2">
    <location>
        <position position="234"/>
    </location>
    <ligand>
        <name>Mn(2+)</name>
        <dbReference type="ChEBI" id="CHEBI:29035"/>
    </ligand>
</feature>
<feature type="binding site" evidence="2">
    <location>
        <begin position="254"/>
        <end position="257"/>
    </location>
    <ligand>
        <name>substrate</name>
    </ligand>
</feature>
<feature type="binding site" evidence="2">
    <location>
        <position position="266"/>
    </location>
    <ligand>
        <name>substrate</name>
    </ligand>
</feature>
<feature type="binding site" evidence="2">
    <location>
        <begin position="366"/>
        <end position="372"/>
    </location>
    <ligand>
        <name>substrate</name>
    </ligand>
</feature>
<feature type="glycosylation site" description="N-linked (GlcNAc...) asparagine" evidence="3">
    <location>
        <position position="300"/>
    </location>
</feature>
<proteinExistence type="evidence at transcript level"/>
<accession>Q8SPR2</accession>
<protein>
    <recommendedName>
        <fullName>N-acetyllactosaminide alpha-1,3-galactosyltransferase</fullName>
        <ecNumber evidence="2">2.4.1.87</ecNumber>
    </recommendedName>
    <alternativeName>
        <fullName>UDP-galactose:beta-D-galactosyl-1,4-N-acetyl-D-glucosaminide alpha-1,3-galactosyltransferase</fullName>
        <shortName>Galactosyltransferase</shortName>
    </alternativeName>
</protein>
<comment type="function">
    <text evidence="1">Synthesizes the galactose-alpha(1,3)-galactose group by catalyzing the transfer of a galactose residue, with an alpha-1,3 linkage, on terminal lactosaminide (Gal-beta-1,4-GlcNAc-R) disaccharide borne by a glycoprotein or a glycolipid. Preferentially glycosylates proteins, can synthesize galactose-alpha(1,3)-galactose on glycoproteins but cannot synthesize the glycolipid called isogloboside 3 (iGb3) (By similarity).</text>
</comment>
<comment type="catalytic activity">
    <reaction evidence="2">
        <text>a beta-D-galactosyl-(1-&gt;4)-N-acetyl-beta-D-glucosaminyl derivative + UDP-alpha-D-galactose = an alpha-D-galactosyl-(1-&gt;3)-beta-D-galactosyl-(1-&gt;4)-N-acetyl-beta-D-glucosaminyl derivative + UDP + H(+)</text>
        <dbReference type="Rhea" id="RHEA:13013"/>
        <dbReference type="ChEBI" id="CHEBI:15378"/>
        <dbReference type="ChEBI" id="CHEBI:58223"/>
        <dbReference type="ChEBI" id="CHEBI:66914"/>
        <dbReference type="ChEBI" id="CHEBI:133507"/>
        <dbReference type="ChEBI" id="CHEBI:138024"/>
        <dbReference type="EC" id="2.4.1.87"/>
    </reaction>
</comment>
<comment type="cofactor">
    <cofactor evidence="2">
        <name>Mn(2+)</name>
        <dbReference type="ChEBI" id="CHEBI:29035"/>
    </cofactor>
    <text evidence="2">Binds 1 Mn(2+) ion per subunit.</text>
</comment>
<comment type="pathway">
    <text evidence="2">Protein modification; protein glycosylation.</text>
</comment>
<comment type="subcellular location">
    <subcellularLocation>
        <location evidence="1">Golgi apparatus</location>
        <location evidence="1">Golgi stack membrane</location>
        <topology evidence="1">Single-pass type II membrane protein</topology>
    </subcellularLocation>
    <text evidence="1">Membrane-bound form in trans cisternae of Golgi.</text>
</comment>
<comment type="domain">
    <text evidence="1">The conserved DXD motif is involved in cofactor binding. The manganese ion interacts with the beta-phosphate group of UDP and may also have a role in catalysis (By similarity).</text>
</comment>
<comment type="similarity">
    <text evidence="4">Belongs to the glycosyltransferase 6 family.</text>
</comment>
<dbReference type="EC" id="2.4.1.87" evidence="2"/>
<dbReference type="EMBL" id="AY034181">
    <property type="protein sequence ID" value="AAK56499.1"/>
    <property type="molecule type" value="mRNA"/>
</dbReference>
<dbReference type="SMR" id="Q8SPR2"/>
<dbReference type="CAZy" id="GT6">
    <property type="family name" value="Glycosyltransferase Family 6"/>
</dbReference>
<dbReference type="GlyCosmos" id="Q8SPR2">
    <property type="glycosylation" value="1 site, No reported glycans"/>
</dbReference>
<dbReference type="UniPathway" id="UPA00378"/>
<dbReference type="Proteomes" id="UP000504640">
    <property type="component" value="Unplaced"/>
</dbReference>
<dbReference type="GO" id="GO:0031985">
    <property type="term" value="C:Golgi cisterna"/>
    <property type="evidence" value="ECO:0000250"/>
    <property type="project" value="UniProtKB"/>
</dbReference>
<dbReference type="GO" id="GO:0032580">
    <property type="term" value="C:Golgi cisterna membrane"/>
    <property type="evidence" value="ECO:0007669"/>
    <property type="project" value="UniProtKB-SubCell"/>
</dbReference>
<dbReference type="GO" id="GO:0031982">
    <property type="term" value="C:vesicle"/>
    <property type="evidence" value="ECO:0007669"/>
    <property type="project" value="TreeGrafter"/>
</dbReference>
<dbReference type="GO" id="GO:0046872">
    <property type="term" value="F:metal ion binding"/>
    <property type="evidence" value="ECO:0007669"/>
    <property type="project" value="UniProtKB-KW"/>
</dbReference>
<dbReference type="GO" id="GO:0047276">
    <property type="term" value="F:N-acetyllactosaminide 3-alpha-galactosyltransferase activity"/>
    <property type="evidence" value="ECO:0007669"/>
    <property type="project" value="UniProtKB-EC"/>
</dbReference>
<dbReference type="GO" id="GO:0005975">
    <property type="term" value="P:carbohydrate metabolic process"/>
    <property type="evidence" value="ECO:0007669"/>
    <property type="project" value="InterPro"/>
</dbReference>
<dbReference type="GO" id="GO:0030259">
    <property type="term" value="P:lipid glycosylation"/>
    <property type="evidence" value="ECO:0007669"/>
    <property type="project" value="TreeGrafter"/>
</dbReference>
<dbReference type="GO" id="GO:0006486">
    <property type="term" value="P:protein glycosylation"/>
    <property type="evidence" value="ECO:0007669"/>
    <property type="project" value="UniProtKB-UniPathway"/>
</dbReference>
<dbReference type="CDD" id="cd02515">
    <property type="entry name" value="Glyco_transf_6"/>
    <property type="match status" value="1"/>
</dbReference>
<dbReference type="FunFam" id="3.90.550.10:FF:000022">
    <property type="entry name" value="Histo-blood group ABO system transferase"/>
    <property type="match status" value="1"/>
</dbReference>
<dbReference type="Gene3D" id="3.90.550.10">
    <property type="entry name" value="Spore Coat Polysaccharide Biosynthesis Protein SpsA, Chain A"/>
    <property type="match status" value="1"/>
</dbReference>
<dbReference type="InterPro" id="IPR005076">
    <property type="entry name" value="Glyco_trans_6"/>
</dbReference>
<dbReference type="InterPro" id="IPR029044">
    <property type="entry name" value="Nucleotide-diphossugar_trans"/>
</dbReference>
<dbReference type="PANTHER" id="PTHR10462">
    <property type="entry name" value="GLYCOSYLTRANSFERASE-RELATED"/>
    <property type="match status" value="1"/>
</dbReference>
<dbReference type="PANTHER" id="PTHR10462:SF26">
    <property type="entry name" value="N-ACETYLLACTOSAMINIDE ALPHA-1,3-GALACTOSYLTRANSFERASE"/>
    <property type="match status" value="1"/>
</dbReference>
<dbReference type="Pfam" id="PF03414">
    <property type="entry name" value="Glyco_transf_6"/>
    <property type="match status" value="1"/>
</dbReference>
<dbReference type="SUPFAM" id="SSF53448">
    <property type="entry name" value="Nucleotide-diphospho-sugar transferases"/>
    <property type="match status" value="1"/>
</dbReference>
<evidence type="ECO:0000250" key="1"/>
<evidence type="ECO:0000250" key="2">
    <source>
        <dbReference type="UniProtKB" id="P14769"/>
    </source>
</evidence>
<evidence type="ECO:0000255" key="3"/>
<evidence type="ECO:0000305" key="4"/>
<name>GGTA1_SAPAP</name>
<reference key="1">
    <citation type="journal article" date="2002" name="J. Biol. Chem.">
        <title>Molecular basis of evolutionary loss of the alpha 1,3-galactosyltransferase gene in higher primates.</title>
        <authorList>
            <person name="Koike C."/>
            <person name="Fung J.J."/>
            <person name="Geller D.A."/>
            <person name="Kannagi R."/>
            <person name="Libert T."/>
            <person name="Luppi P."/>
            <person name="Nakashima I."/>
            <person name="Profozich J."/>
            <person name="Rudert W."/>
            <person name="Sharma S.B."/>
            <person name="Starzl T.E."/>
            <person name="Trucco M."/>
        </authorList>
    </citation>
    <scope>NUCLEOTIDE SEQUENCE [MRNA]</scope>
</reference>
<keyword id="KW-0325">Glycoprotein</keyword>
<keyword id="KW-0328">Glycosyltransferase</keyword>
<keyword id="KW-0333">Golgi apparatus</keyword>
<keyword id="KW-0464">Manganese</keyword>
<keyword id="KW-0472">Membrane</keyword>
<keyword id="KW-0479">Metal-binding</keyword>
<keyword id="KW-1185">Reference proteome</keyword>
<keyword id="KW-0735">Signal-anchor</keyword>
<keyword id="KW-0808">Transferase</keyword>
<keyword id="KW-0812">Transmembrane</keyword>
<keyword id="KW-1133">Transmembrane helix</keyword>